<sequence>MPKPEIVFVTGNANKLREVSMILGGDASPFTLVNEPLDLEELQGADLQEIALAKLQQAVHALGPGRPVFVEDTALSFDEFNGLPGAYIKWFIKSMGLAKVVKMLDSFENKGAYAITTIAYADSKGQLHVFQGKTHGTIVDSRGHTNFGWDSIFQPDESQNNETYAEMAKEDKNKISQRGRAFAQLKEYLYNTGI</sequence>
<name>ITPA_KLULA</name>
<comment type="function">
    <text evidence="1">Pyrophosphatase that hydrolyzes non-canonical purine nucleotides such as inosine triphosphate (ITP), deoxyinosine triphosphate (dITP) or xanthosine 5'-triphosphate (XTP) to their respective monophosphate derivatives. The enzyme does not distinguish between the deoxy- and ribose forms. Probably excludes non-canonical purines from RNA and DNA precursor pools, thus preventing their incorporation into RNA and DNA and avoiding chromosomal lesions.</text>
</comment>
<comment type="catalytic activity">
    <reaction evidence="1">
        <text>ITP + H2O = IMP + diphosphate + H(+)</text>
        <dbReference type="Rhea" id="RHEA:29399"/>
        <dbReference type="ChEBI" id="CHEBI:15377"/>
        <dbReference type="ChEBI" id="CHEBI:15378"/>
        <dbReference type="ChEBI" id="CHEBI:33019"/>
        <dbReference type="ChEBI" id="CHEBI:58053"/>
        <dbReference type="ChEBI" id="CHEBI:61402"/>
        <dbReference type="EC" id="3.6.1.66"/>
    </reaction>
    <physiologicalReaction direction="left-to-right" evidence="1">
        <dbReference type="Rhea" id="RHEA:29400"/>
    </physiologicalReaction>
</comment>
<comment type="catalytic activity">
    <reaction evidence="1">
        <text>dITP + H2O = dIMP + diphosphate + H(+)</text>
        <dbReference type="Rhea" id="RHEA:28342"/>
        <dbReference type="ChEBI" id="CHEBI:15377"/>
        <dbReference type="ChEBI" id="CHEBI:15378"/>
        <dbReference type="ChEBI" id="CHEBI:33019"/>
        <dbReference type="ChEBI" id="CHEBI:61194"/>
        <dbReference type="ChEBI" id="CHEBI:61382"/>
        <dbReference type="EC" id="3.6.1.66"/>
    </reaction>
    <physiologicalReaction direction="left-to-right" evidence="1">
        <dbReference type="Rhea" id="RHEA:28343"/>
    </physiologicalReaction>
</comment>
<comment type="catalytic activity">
    <reaction evidence="1">
        <text>XTP + H2O = XMP + diphosphate + H(+)</text>
        <dbReference type="Rhea" id="RHEA:28610"/>
        <dbReference type="ChEBI" id="CHEBI:15377"/>
        <dbReference type="ChEBI" id="CHEBI:15378"/>
        <dbReference type="ChEBI" id="CHEBI:33019"/>
        <dbReference type="ChEBI" id="CHEBI:57464"/>
        <dbReference type="ChEBI" id="CHEBI:61314"/>
        <dbReference type="EC" id="3.6.1.66"/>
    </reaction>
    <physiologicalReaction direction="left-to-right" evidence="1">
        <dbReference type="Rhea" id="RHEA:28611"/>
    </physiologicalReaction>
</comment>
<comment type="cofactor">
    <cofactor evidence="1">
        <name>Mg(2+)</name>
        <dbReference type="ChEBI" id="CHEBI:18420"/>
    </cofactor>
    <cofactor evidence="1">
        <name>Mn(2+)</name>
        <dbReference type="ChEBI" id="CHEBI:29035"/>
    </cofactor>
    <text evidence="1">Binds 1 divalent metal cation per subunit; can use either Mg(2+) or Mn(2+).</text>
</comment>
<comment type="subunit">
    <text evidence="1">Homodimer.</text>
</comment>
<comment type="subcellular location">
    <subcellularLocation>
        <location evidence="1">Cytoplasm</location>
    </subcellularLocation>
    <subcellularLocation>
        <location evidence="1">Nucleus</location>
    </subcellularLocation>
</comment>
<comment type="similarity">
    <text evidence="1">Belongs to the HAM1 NTPase family.</text>
</comment>
<protein>
    <recommendedName>
        <fullName evidence="1">Inosine triphosphate pyrophosphatase</fullName>
        <shortName evidence="1">ITPase</shortName>
        <shortName evidence="1">Inosine triphosphatase</shortName>
        <ecNumber evidence="1">3.6.1.66</ecNumber>
    </recommendedName>
    <alternativeName>
        <fullName evidence="1">Non-canonical purine NTP pyrophosphatase</fullName>
    </alternativeName>
    <alternativeName>
        <fullName evidence="1">Non-standard purine NTP pyrophosphatase</fullName>
    </alternativeName>
    <alternativeName>
        <fullName evidence="1">Nucleoside-triphosphate diphosphatase</fullName>
    </alternativeName>
    <alternativeName>
        <fullName evidence="1">Nucleoside-triphosphate pyrophosphatase</fullName>
        <shortName evidence="1">NTPase</shortName>
    </alternativeName>
    <alternativeName>
        <fullName evidence="1">XTP/dITP diphosphatase</fullName>
    </alternativeName>
</protein>
<organism>
    <name type="scientific">Kluyveromyces lactis (strain ATCC 8585 / CBS 2359 / DSM 70799 / NBRC 1267 / NRRL Y-1140 / WM37)</name>
    <name type="common">Yeast</name>
    <name type="synonym">Candida sphaerica</name>
    <dbReference type="NCBI Taxonomy" id="284590"/>
    <lineage>
        <taxon>Eukaryota</taxon>
        <taxon>Fungi</taxon>
        <taxon>Dikarya</taxon>
        <taxon>Ascomycota</taxon>
        <taxon>Saccharomycotina</taxon>
        <taxon>Saccharomycetes</taxon>
        <taxon>Saccharomycetales</taxon>
        <taxon>Saccharomycetaceae</taxon>
        <taxon>Kluyveromyces</taxon>
    </lineage>
</organism>
<proteinExistence type="inferred from homology"/>
<reference key="1">
    <citation type="journal article" date="2004" name="Nature">
        <title>Genome evolution in yeasts.</title>
        <authorList>
            <person name="Dujon B."/>
            <person name="Sherman D."/>
            <person name="Fischer G."/>
            <person name="Durrens P."/>
            <person name="Casaregola S."/>
            <person name="Lafontaine I."/>
            <person name="de Montigny J."/>
            <person name="Marck C."/>
            <person name="Neuveglise C."/>
            <person name="Talla E."/>
            <person name="Goffard N."/>
            <person name="Frangeul L."/>
            <person name="Aigle M."/>
            <person name="Anthouard V."/>
            <person name="Babour A."/>
            <person name="Barbe V."/>
            <person name="Barnay S."/>
            <person name="Blanchin S."/>
            <person name="Beckerich J.-M."/>
            <person name="Beyne E."/>
            <person name="Bleykasten C."/>
            <person name="Boisrame A."/>
            <person name="Boyer J."/>
            <person name="Cattolico L."/>
            <person name="Confanioleri F."/>
            <person name="de Daruvar A."/>
            <person name="Despons L."/>
            <person name="Fabre E."/>
            <person name="Fairhead C."/>
            <person name="Ferry-Dumazet H."/>
            <person name="Groppi A."/>
            <person name="Hantraye F."/>
            <person name="Hennequin C."/>
            <person name="Jauniaux N."/>
            <person name="Joyet P."/>
            <person name="Kachouri R."/>
            <person name="Kerrest A."/>
            <person name="Koszul R."/>
            <person name="Lemaire M."/>
            <person name="Lesur I."/>
            <person name="Ma L."/>
            <person name="Muller H."/>
            <person name="Nicaud J.-M."/>
            <person name="Nikolski M."/>
            <person name="Oztas S."/>
            <person name="Ozier-Kalogeropoulos O."/>
            <person name="Pellenz S."/>
            <person name="Potier S."/>
            <person name="Richard G.-F."/>
            <person name="Straub M.-L."/>
            <person name="Suleau A."/>
            <person name="Swennen D."/>
            <person name="Tekaia F."/>
            <person name="Wesolowski-Louvel M."/>
            <person name="Westhof E."/>
            <person name="Wirth B."/>
            <person name="Zeniou-Meyer M."/>
            <person name="Zivanovic Y."/>
            <person name="Bolotin-Fukuhara M."/>
            <person name="Thierry A."/>
            <person name="Bouchier C."/>
            <person name="Caudron B."/>
            <person name="Scarpelli C."/>
            <person name="Gaillardin C."/>
            <person name="Weissenbach J."/>
            <person name="Wincker P."/>
            <person name="Souciet J.-L."/>
        </authorList>
    </citation>
    <scope>NUCLEOTIDE SEQUENCE [LARGE SCALE GENOMIC DNA]</scope>
    <source>
        <strain>ATCC 8585 / CBS 2359 / DSM 70799 / NBRC 1267 / NRRL Y-1140 / WM37</strain>
    </source>
</reference>
<dbReference type="EC" id="3.6.1.66" evidence="1"/>
<dbReference type="EMBL" id="CR382122">
    <property type="protein sequence ID" value="CAH02550.1"/>
    <property type="molecule type" value="Genomic_DNA"/>
</dbReference>
<dbReference type="RefSeq" id="XP_452157.1">
    <property type="nucleotide sequence ID" value="XM_452157.1"/>
</dbReference>
<dbReference type="SMR" id="Q6CV82"/>
<dbReference type="FunCoup" id="Q6CV82">
    <property type="interactions" value="762"/>
</dbReference>
<dbReference type="STRING" id="284590.Q6CV82"/>
<dbReference type="PaxDb" id="284590-Q6CV82"/>
<dbReference type="KEGG" id="kla:KLLA0_B14058g"/>
<dbReference type="eggNOG" id="KOG3222">
    <property type="taxonomic scope" value="Eukaryota"/>
</dbReference>
<dbReference type="HOGENOM" id="CLU_082080_1_1_1"/>
<dbReference type="InParanoid" id="Q6CV82"/>
<dbReference type="OMA" id="YDPIFQP"/>
<dbReference type="Proteomes" id="UP000000598">
    <property type="component" value="Chromosome B"/>
</dbReference>
<dbReference type="GO" id="GO:0005737">
    <property type="term" value="C:cytoplasm"/>
    <property type="evidence" value="ECO:0007669"/>
    <property type="project" value="UniProtKB-SubCell"/>
</dbReference>
<dbReference type="GO" id="GO:0005634">
    <property type="term" value="C:nucleus"/>
    <property type="evidence" value="ECO:0007669"/>
    <property type="project" value="UniProtKB-SubCell"/>
</dbReference>
<dbReference type="GO" id="GO:0035870">
    <property type="term" value="F:dITP diphosphatase activity"/>
    <property type="evidence" value="ECO:0007669"/>
    <property type="project" value="RHEA"/>
</dbReference>
<dbReference type="GO" id="GO:0036220">
    <property type="term" value="F:ITP diphosphatase activity"/>
    <property type="evidence" value="ECO:0007669"/>
    <property type="project" value="RHEA"/>
</dbReference>
<dbReference type="GO" id="GO:0046872">
    <property type="term" value="F:metal ion binding"/>
    <property type="evidence" value="ECO:0007669"/>
    <property type="project" value="UniProtKB-KW"/>
</dbReference>
<dbReference type="GO" id="GO:0000166">
    <property type="term" value="F:nucleotide binding"/>
    <property type="evidence" value="ECO:0007669"/>
    <property type="project" value="UniProtKB-KW"/>
</dbReference>
<dbReference type="GO" id="GO:0036222">
    <property type="term" value="F:XTP diphosphatase activity"/>
    <property type="evidence" value="ECO:0007669"/>
    <property type="project" value="RHEA"/>
</dbReference>
<dbReference type="GO" id="GO:0009204">
    <property type="term" value="P:deoxyribonucleoside triphosphate catabolic process"/>
    <property type="evidence" value="ECO:0007669"/>
    <property type="project" value="UniProtKB-UniRule"/>
</dbReference>
<dbReference type="GO" id="GO:0009117">
    <property type="term" value="P:nucleotide metabolic process"/>
    <property type="evidence" value="ECO:0007669"/>
    <property type="project" value="UniProtKB-KW"/>
</dbReference>
<dbReference type="FunFam" id="3.90.950.10:FF:000009">
    <property type="entry name" value="Inosine triphosphate pyrophosphatase"/>
    <property type="match status" value="1"/>
</dbReference>
<dbReference type="Gene3D" id="3.90.950.10">
    <property type="match status" value="1"/>
</dbReference>
<dbReference type="HAMAP" id="MF_03148">
    <property type="entry name" value="HAM1_NTPase"/>
    <property type="match status" value="1"/>
</dbReference>
<dbReference type="InterPro" id="IPR027502">
    <property type="entry name" value="ITPase"/>
</dbReference>
<dbReference type="InterPro" id="IPR029001">
    <property type="entry name" value="ITPase-like_fam"/>
</dbReference>
<dbReference type="InterPro" id="IPR002637">
    <property type="entry name" value="RdgB/HAM1"/>
</dbReference>
<dbReference type="NCBIfam" id="TIGR00042">
    <property type="entry name" value="RdgB/HAM1 family non-canonical purine NTP pyrophosphatase"/>
    <property type="match status" value="1"/>
</dbReference>
<dbReference type="PANTHER" id="PTHR11067:SF9">
    <property type="entry name" value="INOSINE TRIPHOSPHATE PYROPHOSPHATASE"/>
    <property type="match status" value="1"/>
</dbReference>
<dbReference type="PANTHER" id="PTHR11067">
    <property type="entry name" value="INOSINE TRIPHOSPHATE PYROPHOSPHATASE/HAM1 PROTEIN"/>
    <property type="match status" value="1"/>
</dbReference>
<dbReference type="Pfam" id="PF01725">
    <property type="entry name" value="Ham1p_like"/>
    <property type="match status" value="1"/>
</dbReference>
<dbReference type="SUPFAM" id="SSF52972">
    <property type="entry name" value="ITPase-like"/>
    <property type="match status" value="1"/>
</dbReference>
<keyword id="KW-0963">Cytoplasm</keyword>
<keyword id="KW-0378">Hydrolase</keyword>
<keyword id="KW-0460">Magnesium</keyword>
<keyword id="KW-0464">Manganese</keyword>
<keyword id="KW-0479">Metal-binding</keyword>
<keyword id="KW-0546">Nucleotide metabolism</keyword>
<keyword id="KW-0547">Nucleotide-binding</keyword>
<keyword id="KW-0539">Nucleus</keyword>
<keyword id="KW-1185">Reference proteome</keyword>
<gene>
    <name evidence="1" type="primary">HAM1</name>
    <name type="ordered locus">KLLA0B14058g</name>
</gene>
<accession>Q6CV82</accession>
<evidence type="ECO:0000255" key="1">
    <source>
        <dbReference type="HAMAP-Rule" id="MF_03148"/>
    </source>
</evidence>
<feature type="chain" id="PRO_0000413141" description="Inosine triphosphate pyrophosphatase">
    <location>
        <begin position="1"/>
        <end position="194"/>
    </location>
</feature>
<feature type="binding site" evidence="1">
    <location>
        <begin position="10"/>
        <end position="15"/>
    </location>
    <ligand>
        <name>ITP</name>
        <dbReference type="ChEBI" id="CHEBI:61402"/>
    </ligand>
</feature>
<feature type="binding site" evidence="1">
    <location>
        <position position="41"/>
    </location>
    <ligand>
        <name>Mg(2+)</name>
        <dbReference type="ChEBI" id="CHEBI:18420"/>
    </ligand>
</feature>
<feature type="binding site" evidence="1">
    <location>
        <position position="54"/>
    </location>
    <ligand>
        <name>ITP</name>
        <dbReference type="ChEBI" id="CHEBI:61402"/>
    </ligand>
</feature>
<feature type="binding site" evidence="1">
    <location>
        <begin position="72"/>
        <end position="73"/>
    </location>
    <ligand>
        <name>ITP</name>
        <dbReference type="ChEBI" id="CHEBI:61402"/>
    </ligand>
</feature>
<feature type="binding site" evidence="1">
    <location>
        <position position="89"/>
    </location>
    <ligand>
        <name>ITP</name>
        <dbReference type="ChEBI" id="CHEBI:61402"/>
    </ligand>
</feature>
<feature type="binding site" evidence="1">
    <location>
        <begin position="147"/>
        <end position="150"/>
    </location>
    <ligand>
        <name>ITP</name>
        <dbReference type="ChEBI" id="CHEBI:61402"/>
    </ligand>
</feature>
<feature type="binding site" evidence="1">
    <location>
        <position position="172"/>
    </location>
    <ligand>
        <name>ITP</name>
        <dbReference type="ChEBI" id="CHEBI:61402"/>
    </ligand>
</feature>
<feature type="binding site" evidence="1">
    <location>
        <begin position="177"/>
        <end position="178"/>
    </location>
    <ligand>
        <name>ITP</name>
        <dbReference type="ChEBI" id="CHEBI:61402"/>
    </ligand>
</feature>